<dbReference type="EC" id="2.1.2.9" evidence="1"/>
<dbReference type="EMBL" id="CP000252">
    <property type="protein sequence ID" value="ABC76832.1"/>
    <property type="molecule type" value="Genomic_DNA"/>
</dbReference>
<dbReference type="RefSeq" id="WP_011416865.1">
    <property type="nucleotide sequence ID" value="NC_007759.1"/>
</dbReference>
<dbReference type="SMR" id="Q2LRX4"/>
<dbReference type="FunCoup" id="Q2LRX4">
    <property type="interactions" value="449"/>
</dbReference>
<dbReference type="STRING" id="56780.SYN_02707"/>
<dbReference type="KEGG" id="sat:SYN_02707"/>
<dbReference type="eggNOG" id="COG0223">
    <property type="taxonomic scope" value="Bacteria"/>
</dbReference>
<dbReference type="HOGENOM" id="CLU_033347_1_1_7"/>
<dbReference type="InParanoid" id="Q2LRX4"/>
<dbReference type="OrthoDB" id="9802815at2"/>
<dbReference type="Proteomes" id="UP000001933">
    <property type="component" value="Chromosome"/>
</dbReference>
<dbReference type="GO" id="GO:0005829">
    <property type="term" value="C:cytosol"/>
    <property type="evidence" value="ECO:0007669"/>
    <property type="project" value="TreeGrafter"/>
</dbReference>
<dbReference type="GO" id="GO:0004479">
    <property type="term" value="F:methionyl-tRNA formyltransferase activity"/>
    <property type="evidence" value="ECO:0007669"/>
    <property type="project" value="UniProtKB-UniRule"/>
</dbReference>
<dbReference type="CDD" id="cd08646">
    <property type="entry name" value="FMT_core_Met-tRNA-FMT_N"/>
    <property type="match status" value="1"/>
</dbReference>
<dbReference type="CDD" id="cd08704">
    <property type="entry name" value="Met_tRNA_FMT_C"/>
    <property type="match status" value="1"/>
</dbReference>
<dbReference type="FunFam" id="3.40.50.12230:FF:000001">
    <property type="entry name" value="Methionyl-tRNA formyltransferase"/>
    <property type="match status" value="1"/>
</dbReference>
<dbReference type="Gene3D" id="3.10.25.10">
    <property type="entry name" value="Formyl transferase, C-terminal domain"/>
    <property type="match status" value="1"/>
</dbReference>
<dbReference type="Gene3D" id="3.40.50.170">
    <property type="entry name" value="Formyl transferase, N-terminal domain"/>
    <property type="match status" value="1"/>
</dbReference>
<dbReference type="HAMAP" id="MF_00182">
    <property type="entry name" value="Formyl_trans"/>
    <property type="match status" value="1"/>
</dbReference>
<dbReference type="InterPro" id="IPR005794">
    <property type="entry name" value="Fmt"/>
</dbReference>
<dbReference type="InterPro" id="IPR005793">
    <property type="entry name" value="Formyl_trans_C"/>
</dbReference>
<dbReference type="InterPro" id="IPR037022">
    <property type="entry name" value="Formyl_trans_C_sf"/>
</dbReference>
<dbReference type="InterPro" id="IPR002376">
    <property type="entry name" value="Formyl_transf_N"/>
</dbReference>
<dbReference type="InterPro" id="IPR036477">
    <property type="entry name" value="Formyl_transf_N_sf"/>
</dbReference>
<dbReference type="InterPro" id="IPR011034">
    <property type="entry name" value="Formyl_transferase-like_C_sf"/>
</dbReference>
<dbReference type="InterPro" id="IPR001555">
    <property type="entry name" value="GART_AS"/>
</dbReference>
<dbReference type="InterPro" id="IPR044135">
    <property type="entry name" value="Met-tRNA-FMT_C"/>
</dbReference>
<dbReference type="InterPro" id="IPR041711">
    <property type="entry name" value="Met-tRNA-FMT_N"/>
</dbReference>
<dbReference type="NCBIfam" id="TIGR00460">
    <property type="entry name" value="fmt"/>
    <property type="match status" value="1"/>
</dbReference>
<dbReference type="PANTHER" id="PTHR11138">
    <property type="entry name" value="METHIONYL-TRNA FORMYLTRANSFERASE"/>
    <property type="match status" value="1"/>
</dbReference>
<dbReference type="PANTHER" id="PTHR11138:SF5">
    <property type="entry name" value="METHIONYL-TRNA FORMYLTRANSFERASE, MITOCHONDRIAL"/>
    <property type="match status" value="1"/>
</dbReference>
<dbReference type="Pfam" id="PF02911">
    <property type="entry name" value="Formyl_trans_C"/>
    <property type="match status" value="1"/>
</dbReference>
<dbReference type="Pfam" id="PF00551">
    <property type="entry name" value="Formyl_trans_N"/>
    <property type="match status" value="1"/>
</dbReference>
<dbReference type="SUPFAM" id="SSF50486">
    <property type="entry name" value="FMT C-terminal domain-like"/>
    <property type="match status" value="1"/>
</dbReference>
<dbReference type="SUPFAM" id="SSF53328">
    <property type="entry name" value="Formyltransferase"/>
    <property type="match status" value="1"/>
</dbReference>
<dbReference type="PROSITE" id="PS00373">
    <property type="entry name" value="GART"/>
    <property type="match status" value="1"/>
</dbReference>
<comment type="function">
    <text evidence="1">Attaches a formyl group to the free amino group of methionyl-tRNA(fMet). The formyl group appears to play a dual role in the initiator identity of N-formylmethionyl-tRNA by promoting its recognition by IF2 and preventing the misappropriation of this tRNA by the elongation apparatus.</text>
</comment>
<comment type="catalytic activity">
    <reaction evidence="1">
        <text>L-methionyl-tRNA(fMet) + (6R)-10-formyltetrahydrofolate = N-formyl-L-methionyl-tRNA(fMet) + (6S)-5,6,7,8-tetrahydrofolate + H(+)</text>
        <dbReference type="Rhea" id="RHEA:24380"/>
        <dbReference type="Rhea" id="RHEA-COMP:9952"/>
        <dbReference type="Rhea" id="RHEA-COMP:9953"/>
        <dbReference type="ChEBI" id="CHEBI:15378"/>
        <dbReference type="ChEBI" id="CHEBI:57453"/>
        <dbReference type="ChEBI" id="CHEBI:78530"/>
        <dbReference type="ChEBI" id="CHEBI:78844"/>
        <dbReference type="ChEBI" id="CHEBI:195366"/>
        <dbReference type="EC" id="2.1.2.9"/>
    </reaction>
</comment>
<comment type="similarity">
    <text evidence="1">Belongs to the Fmt family.</text>
</comment>
<evidence type="ECO:0000255" key="1">
    <source>
        <dbReference type="HAMAP-Rule" id="MF_00182"/>
    </source>
</evidence>
<protein>
    <recommendedName>
        <fullName evidence="1">Methionyl-tRNA formyltransferase</fullName>
        <ecNumber evidence="1">2.1.2.9</ecNumber>
    </recommendedName>
</protein>
<organism>
    <name type="scientific">Syntrophus aciditrophicus (strain SB)</name>
    <dbReference type="NCBI Taxonomy" id="56780"/>
    <lineage>
        <taxon>Bacteria</taxon>
        <taxon>Pseudomonadati</taxon>
        <taxon>Thermodesulfobacteriota</taxon>
        <taxon>Syntrophia</taxon>
        <taxon>Syntrophales</taxon>
        <taxon>Syntrophaceae</taxon>
        <taxon>Syntrophus</taxon>
    </lineage>
</organism>
<gene>
    <name evidence="1" type="primary">fmt</name>
    <name type="ordered locus">SYNAS_09530</name>
    <name type="ORF">SYN_02707</name>
</gene>
<keyword id="KW-0648">Protein biosynthesis</keyword>
<keyword id="KW-1185">Reference proteome</keyword>
<keyword id="KW-0808">Transferase</keyword>
<reference key="1">
    <citation type="journal article" date="2007" name="Proc. Natl. Acad. Sci. U.S.A.">
        <title>The genome of Syntrophus aciditrophicus: life at the thermodynamic limit of microbial growth.</title>
        <authorList>
            <person name="McInerney M.J."/>
            <person name="Rohlin L."/>
            <person name="Mouttaki H."/>
            <person name="Kim U."/>
            <person name="Krupp R.S."/>
            <person name="Rios-Hernandez L."/>
            <person name="Sieber J."/>
            <person name="Struchtemeyer C.G."/>
            <person name="Bhattacharyya A."/>
            <person name="Campbell J.W."/>
            <person name="Gunsalus R.P."/>
        </authorList>
    </citation>
    <scope>NUCLEOTIDE SEQUENCE [LARGE SCALE GENOMIC DNA]</scope>
    <source>
        <strain>SB</strain>
    </source>
</reference>
<proteinExistence type="inferred from homology"/>
<accession>Q2LRX4</accession>
<name>FMT_SYNAS</name>
<feature type="chain" id="PRO_1000020186" description="Methionyl-tRNA formyltransferase">
    <location>
        <begin position="1"/>
        <end position="312"/>
    </location>
</feature>
<feature type="binding site" evidence="1">
    <location>
        <begin position="112"/>
        <end position="115"/>
    </location>
    <ligand>
        <name>(6S)-5,6,7,8-tetrahydrofolate</name>
        <dbReference type="ChEBI" id="CHEBI:57453"/>
    </ligand>
</feature>
<sequence>MAKISILFMGTPEFALPSLEILVRNGYPIAAVVTQPDRPKGRGKQLVAPPVKIAATSYQIPVLQPPGIKDPAFLEILEKISPDLIVVAAFGQILPKTVLDFPPLGCINVHPSLLPRYRGAAPINWTLIHGETRTGVTIMYMDEGLDTGDILLQEETPIPPEENFGILHDRLSNLGADLLLRAVRLLEAHQAPRNPQEDSLSSYAPMLKKEDGLIRWSEEVSTIANRIRGLSPAPGAYTFLNGKTLKIFAAAGIEQSVPGQPGEVGKLTDQGLQVTAGNGYVVLQDVQMENRKRMNVSDFLRGHKLSTGTVLG</sequence>